<evidence type="ECO:0000255" key="1">
    <source>
        <dbReference type="HAMAP-Rule" id="MF_00214"/>
    </source>
</evidence>
<evidence type="ECO:0000305" key="2"/>
<gene>
    <name evidence="1" type="primary">aroD</name>
    <name type="ordered locus">SPA1493</name>
</gene>
<proteinExistence type="inferred from homology"/>
<name>AROD_SALPA</name>
<protein>
    <recommendedName>
        <fullName evidence="1">3-dehydroquinate dehydratase</fullName>
        <shortName evidence="1">3-dehydroquinase</shortName>
        <ecNumber evidence="1">4.2.1.10</ecNumber>
    </recommendedName>
    <alternativeName>
        <fullName evidence="1">Type I DHQase</fullName>
    </alternativeName>
    <alternativeName>
        <fullName evidence="1">Type I dehydroquinase</fullName>
        <shortName evidence="1">DHQ1</shortName>
    </alternativeName>
</protein>
<sequence>MKTVTVKNLIIGEGMPKIIVSLMGRDINSVKAEALAYREATFDILEWRVDHFMDIASTQSVLTAARVIRDAMPDIPLLFTFRSAKEGGEQTITTQHYLSLNRAAIDSGLVDMIDLELFTGDADVKATVDYAHAHNVYVVMSNHDFHQTPSAEEMVLRLRKMQALGADIPKIAVMPQSKHDVLTLLTATLEMQQHYADRPVITMSMAKEGVISRLAGEVFGSAATFGAVKQASAPGQIAVNDLRSVLMILHNA</sequence>
<dbReference type="EC" id="4.2.1.10" evidence="1"/>
<dbReference type="EMBL" id="CP000026">
    <property type="protein sequence ID" value="AAV77426.1"/>
    <property type="status" value="ALT_INIT"/>
    <property type="molecule type" value="Genomic_DNA"/>
</dbReference>
<dbReference type="RefSeq" id="WP_000860213.1">
    <property type="nucleotide sequence ID" value="NC_006511.1"/>
</dbReference>
<dbReference type="SMR" id="Q5PH79"/>
<dbReference type="KEGG" id="spt:SPA1493"/>
<dbReference type="HOGENOM" id="CLU_064444_0_0_6"/>
<dbReference type="UniPathway" id="UPA00053">
    <property type="reaction ID" value="UER00086"/>
</dbReference>
<dbReference type="Proteomes" id="UP000008185">
    <property type="component" value="Chromosome"/>
</dbReference>
<dbReference type="GO" id="GO:0003855">
    <property type="term" value="F:3-dehydroquinate dehydratase activity"/>
    <property type="evidence" value="ECO:0007669"/>
    <property type="project" value="UniProtKB-UniRule"/>
</dbReference>
<dbReference type="GO" id="GO:0046279">
    <property type="term" value="P:3,4-dihydroxybenzoate biosynthetic process"/>
    <property type="evidence" value="ECO:0007669"/>
    <property type="project" value="UniProtKB-ARBA"/>
</dbReference>
<dbReference type="GO" id="GO:0008652">
    <property type="term" value="P:amino acid biosynthetic process"/>
    <property type="evidence" value="ECO:0007669"/>
    <property type="project" value="UniProtKB-KW"/>
</dbReference>
<dbReference type="GO" id="GO:0009073">
    <property type="term" value="P:aromatic amino acid family biosynthetic process"/>
    <property type="evidence" value="ECO:0007669"/>
    <property type="project" value="UniProtKB-KW"/>
</dbReference>
<dbReference type="GO" id="GO:0009423">
    <property type="term" value="P:chorismate biosynthetic process"/>
    <property type="evidence" value="ECO:0007669"/>
    <property type="project" value="UniProtKB-UniRule"/>
</dbReference>
<dbReference type="CDD" id="cd00502">
    <property type="entry name" value="DHQase_I"/>
    <property type="match status" value="1"/>
</dbReference>
<dbReference type="FunFam" id="3.20.20.70:FF:000047">
    <property type="entry name" value="3-dehydroquinate dehydratase"/>
    <property type="match status" value="1"/>
</dbReference>
<dbReference type="Gene3D" id="3.20.20.70">
    <property type="entry name" value="Aldolase class I"/>
    <property type="match status" value="1"/>
</dbReference>
<dbReference type="HAMAP" id="MF_00214">
    <property type="entry name" value="AroD"/>
    <property type="match status" value="1"/>
</dbReference>
<dbReference type="InterPro" id="IPR018508">
    <property type="entry name" value="3-dehydroquinate_DH_AS"/>
</dbReference>
<dbReference type="InterPro" id="IPR013785">
    <property type="entry name" value="Aldolase_TIM"/>
</dbReference>
<dbReference type="InterPro" id="IPR001381">
    <property type="entry name" value="DHquinase_I"/>
</dbReference>
<dbReference type="InterPro" id="IPR050146">
    <property type="entry name" value="Type-I_3-dehydroquinase"/>
</dbReference>
<dbReference type="NCBIfam" id="TIGR01093">
    <property type="entry name" value="aroD"/>
    <property type="match status" value="1"/>
</dbReference>
<dbReference type="PANTHER" id="PTHR43699">
    <property type="entry name" value="3-DEHYDROQUINATE DEHYDRATASE"/>
    <property type="match status" value="1"/>
</dbReference>
<dbReference type="PANTHER" id="PTHR43699:SF1">
    <property type="entry name" value="3-DEHYDROQUINATE DEHYDRATASE"/>
    <property type="match status" value="1"/>
</dbReference>
<dbReference type="Pfam" id="PF01487">
    <property type="entry name" value="DHquinase_I"/>
    <property type="match status" value="1"/>
</dbReference>
<dbReference type="SUPFAM" id="SSF51569">
    <property type="entry name" value="Aldolase"/>
    <property type="match status" value="1"/>
</dbReference>
<dbReference type="PROSITE" id="PS01028">
    <property type="entry name" value="DEHYDROQUINASE_I"/>
    <property type="match status" value="1"/>
</dbReference>
<comment type="function">
    <text evidence="1">Involved in the third step of the chorismate pathway, which leads to the biosynthesis of aromatic amino acids. Catalyzes the cis-dehydration of 3-dehydroquinate (DHQ) and introduces the first double bond of the aromatic ring to yield 3-dehydroshikimate.</text>
</comment>
<comment type="catalytic activity">
    <reaction evidence="1">
        <text>3-dehydroquinate = 3-dehydroshikimate + H2O</text>
        <dbReference type="Rhea" id="RHEA:21096"/>
        <dbReference type="ChEBI" id="CHEBI:15377"/>
        <dbReference type="ChEBI" id="CHEBI:16630"/>
        <dbReference type="ChEBI" id="CHEBI:32364"/>
        <dbReference type="EC" id="4.2.1.10"/>
    </reaction>
</comment>
<comment type="pathway">
    <text evidence="1">Metabolic intermediate biosynthesis; chorismate biosynthesis; chorismate from D-erythrose 4-phosphate and phosphoenolpyruvate: step 3/7.</text>
</comment>
<comment type="subunit">
    <text evidence="1">Homodimer.</text>
</comment>
<comment type="similarity">
    <text evidence="1">Belongs to the type-I 3-dehydroquinase family.</text>
</comment>
<comment type="sequence caution" evidence="2">
    <conflict type="erroneous initiation">
        <sequence resource="EMBL-CDS" id="AAV77426"/>
    </conflict>
    <text>Truncated N-terminus.</text>
</comment>
<accession>Q5PH79</accession>
<feature type="chain" id="PRO_0000325530" description="3-dehydroquinate dehydratase">
    <location>
        <begin position="1"/>
        <end position="252"/>
    </location>
</feature>
<feature type="active site" description="Proton donor/acceptor" evidence="1">
    <location>
        <position position="143"/>
    </location>
</feature>
<feature type="active site" description="Schiff-base intermediate with substrate" evidence="1">
    <location>
        <position position="170"/>
    </location>
</feature>
<feature type="binding site" evidence="1">
    <location>
        <position position="21"/>
    </location>
    <ligand>
        <name>3-dehydroquinate</name>
        <dbReference type="ChEBI" id="CHEBI:32364"/>
    </ligand>
</feature>
<feature type="binding site" evidence="1">
    <location>
        <begin position="46"/>
        <end position="48"/>
    </location>
    <ligand>
        <name>3-dehydroquinate</name>
        <dbReference type="ChEBI" id="CHEBI:32364"/>
    </ligand>
</feature>
<feature type="binding site" evidence="1">
    <location>
        <position position="82"/>
    </location>
    <ligand>
        <name>3-dehydroquinate</name>
        <dbReference type="ChEBI" id="CHEBI:32364"/>
    </ligand>
</feature>
<feature type="binding site" evidence="1">
    <location>
        <position position="213"/>
    </location>
    <ligand>
        <name>3-dehydroquinate</name>
        <dbReference type="ChEBI" id="CHEBI:32364"/>
    </ligand>
</feature>
<feature type="binding site" evidence="1">
    <location>
        <position position="232"/>
    </location>
    <ligand>
        <name>3-dehydroquinate</name>
        <dbReference type="ChEBI" id="CHEBI:32364"/>
    </ligand>
</feature>
<feature type="binding site" evidence="1">
    <location>
        <position position="236"/>
    </location>
    <ligand>
        <name>3-dehydroquinate</name>
        <dbReference type="ChEBI" id="CHEBI:32364"/>
    </ligand>
</feature>
<organism>
    <name type="scientific">Salmonella paratyphi A (strain ATCC 9150 / SARB42)</name>
    <dbReference type="NCBI Taxonomy" id="295319"/>
    <lineage>
        <taxon>Bacteria</taxon>
        <taxon>Pseudomonadati</taxon>
        <taxon>Pseudomonadota</taxon>
        <taxon>Gammaproteobacteria</taxon>
        <taxon>Enterobacterales</taxon>
        <taxon>Enterobacteriaceae</taxon>
        <taxon>Salmonella</taxon>
    </lineage>
</organism>
<keyword id="KW-0028">Amino-acid biosynthesis</keyword>
<keyword id="KW-0057">Aromatic amino acid biosynthesis</keyword>
<keyword id="KW-0456">Lyase</keyword>
<keyword id="KW-0704">Schiff base</keyword>
<reference key="1">
    <citation type="journal article" date="2004" name="Nat. Genet.">
        <title>Comparison of genome degradation in Paratyphi A and Typhi, human-restricted serovars of Salmonella enterica that cause typhoid.</title>
        <authorList>
            <person name="McClelland M."/>
            <person name="Sanderson K.E."/>
            <person name="Clifton S.W."/>
            <person name="Latreille P."/>
            <person name="Porwollik S."/>
            <person name="Sabo A."/>
            <person name="Meyer R."/>
            <person name="Bieri T."/>
            <person name="Ozersky P."/>
            <person name="McLellan M."/>
            <person name="Harkins C.R."/>
            <person name="Wang C."/>
            <person name="Nguyen C."/>
            <person name="Berghoff A."/>
            <person name="Elliott G."/>
            <person name="Kohlberg S."/>
            <person name="Strong C."/>
            <person name="Du F."/>
            <person name="Carter J."/>
            <person name="Kremizki C."/>
            <person name="Layman D."/>
            <person name="Leonard S."/>
            <person name="Sun H."/>
            <person name="Fulton L."/>
            <person name="Nash W."/>
            <person name="Miner T."/>
            <person name="Minx P."/>
            <person name="Delehaunty K."/>
            <person name="Fronick C."/>
            <person name="Magrini V."/>
            <person name="Nhan M."/>
            <person name="Warren W."/>
            <person name="Florea L."/>
            <person name="Spieth J."/>
            <person name="Wilson R.K."/>
        </authorList>
    </citation>
    <scope>NUCLEOTIDE SEQUENCE [LARGE SCALE GENOMIC DNA]</scope>
    <source>
        <strain>ATCC 9150 / SARB42</strain>
    </source>
</reference>